<gene>
    <name evidence="1" type="primary">xseB</name>
    <name type="ordered locus">SERP1083</name>
</gene>
<keyword id="KW-0963">Cytoplasm</keyword>
<keyword id="KW-0269">Exonuclease</keyword>
<keyword id="KW-0378">Hydrolase</keyword>
<keyword id="KW-0540">Nuclease</keyword>
<keyword id="KW-1185">Reference proteome</keyword>
<accession>Q5HP30</accession>
<name>EX7S_STAEQ</name>
<reference key="1">
    <citation type="journal article" date="2005" name="J. Bacteriol.">
        <title>Insights on evolution of virulence and resistance from the complete genome analysis of an early methicillin-resistant Staphylococcus aureus strain and a biofilm-producing methicillin-resistant Staphylococcus epidermidis strain.</title>
        <authorList>
            <person name="Gill S.R."/>
            <person name="Fouts D.E."/>
            <person name="Archer G.L."/>
            <person name="Mongodin E.F."/>
            <person name="DeBoy R.T."/>
            <person name="Ravel J."/>
            <person name="Paulsen I.T."/>
            <person name="Kolonay J.F."/>
            <person name="Brinkac L.M."/>
            <person name="Beanan M.J."/>
            <person name="Dodson R.J."/>
            <person name="Daugherty S.C."/>
            <person name="Madupu R."/>
            <person name="Angiuoli S.V."/>
            <person name="Durkin A.S."/>
            <person name="Haft D.H."/>
            <person name="Vamathevan J.J."/>
            <person name="Khouri H."/>
            <person name="Utterback T.R."/>
            <person name="Lee C."/>
            <person name="Dimitrov G."/>
            <person name="Jiang L."/>
            <person name="Qin H."/>
            <person name="Weidman J."/>
            <person name="Tran K."/>
            <person name="Kang K.H."/>
            <person name="Hance I.R."/>
            <person name="Nelson K.E."/>
            <person name="Fraser C.M."/>
        </authorList>
    </citation>
    <scope>NUCLEOTIDE SEQUENCE [LARGE SCALE GENOMIC DNA]</scope>
    <source>
        <strain>ATCC 35984 / DSM 28319 / BCRC 17069 / CCUG 31568 / BM 3577 / RP62A</strain>
    </source>
</reference>
<proteinExistence type="inferred from homology"/>
<feature type="chain" id="PRO_0000207010" description="Exodeoxyribonuclease 7 small subunit">
    <location>
        <begin position="1"/>
        <end position="76"/>
    </location>
</feature>
<organism>
    <name type="scientific">Staphylococcus epidermidis (strain ATCC 35984 / DSM 28319 / BCRC 17069 / CCUG 31568 / BM 3577 / RP62A)</name>
    <dbReference type="NCBI Taxonomy" id="176279"/>
    <lineage>
        <taxon>Bacteria</taxon>
        <taxon>Bacillati</taxon>
        <taxon>Bacillota</taxon>
        <taxon>Bacilli</taxon>
        <taxon>Bacillales</taxon>
        <taxon>Staphylococcaceae</taxon>
        <taxon>Staphylococcus</taxon>
    </lineage>
</organism>
<protein>
    <recommendedName>
        <fullName evidence="1">Exodeoxyribonuclease 7 small subunit</fullName>
        <ecNumber evidence="1">3.1.11.6</ecNumber>
    </recommendedName>
    <alternativeName>
        <fullName evidence="1">Exodeoxyribonuclease VII small subunit</fullName>
        <shortName evidence="1">Exonuclease VII small subunit</shortName>
    </alternativeName>
</protein>
<sequence length="76" mass="8747">MSKEKQSFEEMMKELENIVQKLDNEAVSLEESLDLYQRGMKLSANCDSTLKEAEKKVNELMQEEVGDKGNEETTDE</sequence>
<evidence type="ECO:0000255" key="1">
    <source>
        <dbReference type="HAMAP-Rule" id="MF_00337"/>
    </source>
</evidence>
<dbReference type="EC" id="3.1.11.6" evidence="1"/>
<dbReference type="EMBL" id="CP000029">
    <property type="protein sequence ID" value="AAW54458.1"/>
    <property type="molecule type" value="Genomic_DNA"/>
</dbReference>
<dbReference type="RefSeq" id="WP_001830935.1">
    <property type="nucleotide sequence ID" value="NC_002976.3"/>
</dbReference>
<dbReference type="SMR" id="Q5HP30"/>
<dbReference type="STRING" id="176279.SERP1083"/>
<dbReference type="KEGG" id="ser:SERP1083"/>
<dbReference type="eggNOG" id="COG1722">
    <property type="taxonomic scope" value="Bacteria"/>
</dbReference>
<dbReference type="HOGENOM" id="CLU_145918_3_2_9"/>
<dbReference type="Proteomes" id="UP000000531">
    <property type="component" value="Chromosome"/>
</dbReference>
<dbReference type="GO" id="GO:0005829">
    <property type="term" value="C:cytosol"/>
    <property type="evidence" value="ECO:0007669"/>
    <property type="project" value="TreeGrafter"/>
</dbReference>
<dbReference type="GO" id="GO:0009318">
    <property type="term" value="C:exodeoxyribonuclease VII complex"/>
    <property type="evidence" value="ECO:0007669"/>
    <property type="project" value="InterPro"/>
</dbReference>
<dbReference type="GO" id="GO:0008855">
    <property type="term" value="F:exodeoxyribonuclease VII activity"/>
    <property type="evidence" value="ECO:0007669"/>
    <property type="project" value="UniProtKB-UniRule"/>
</dbReference>
<dbReference type="GO" id="GO:0006308">
    <property type="term" value="P:DNA catabolic process"/>
    <property type="evidence" value="ECO:0007669"/>
    <property type="project" value="UniProtKB-UniRule"/>
</dbReference>
<dbReference type="Gene3D" id="1.10.287.1040">
    <property type="entry name" value="Exonuclease VII, small subunit"/>
    <property type="match status" value="1"/>
</dbReference>
<dbReference type="HAMAP" id="MF_00337">
    <property type="entry name" value="Exonuc_7_S"/>
    <property type="match status" value="1"/>
</dbReference>
<dbReference type="InterPro" id="IPR003761">
    <property type="entry name" value="Exonuc_VII_S"/>
</dbReference>
<dbReference type="InterPro" id="IPR037004">
    <property type="entry name" value="Exonuc_VII_ssu_sf"/>
</dbReference>
<dbReference type="NCBIfam" id="NF002140">
    <property type="entry name" value="PRK00977.1-4"/>
    <property type="match status" value="1"/>
</dbReference>
<dbReference type="NCBIfam" id="NF010671">
    <property type="entry name" value="PRK14068.1"/>
    <property type="match status" value="1"/>
</dbReference>
<dbReference type="NCBIfam" id="TIGR01280">
    <property type="entry name" value="xseB"/>
    <property type="match status" value="1"/>
</dbReference>
<dbReference type="PANTHER" id="PTHR34137">
    <property type="entry name" value="EXODEOXYRIBONUCLEASE 7 SMALL SUBUNIT"/>
    <property type="match status" value="1"/>
</dbReference>
<dbReference type="PANTHER" id="PTHR34137:SF1">
    <property type="entry name" value="EXODEOXYRIBONUCLEASE 7 SMALL SUBUNIT"/>
    <property type="match status" value="1"/>
</dbReference>
<dbReference type="Pfam" id="PF02609">
    <property type="entry name" value="Exonuc_VII_S"/>
    <property type="match status" value="1"/>
</dbReference>
<dbReference type="PIRSF" id="PIRSF006488">
    <property type="entry name" value="Exonuc_VII_S"/>
    <property type="match status" value="1"/>
</dbReference>
<dbReference type="SUPFAM" id="SSF116842">
    <property type="entry name" value="XseB-like"/>
    <property type="match status" value="1"/>
</dbReference>
<comment type="function">
    <text evidence="1">Bidirectionally degrades single-stranded DNA into large acid-insoluble oligonucleotides, which are then degraded further into small acid-soluble oligonucleotides.</text>
</comment>
<comment type="catalytic activity">
    <reaction evidence="1">
        <text>Exonucleolytic cleavage in either 5'- to 3'- or 3'- to 5'-direction to yield nucleoside 5'-phosphates.</text>
        <dbReference type="EC" id="3.1.11.6"/>
    </reaction>
</comment>
<comment type="subunit">
    <text evidence="1">Heterooligomer composed of large and small subunits.</text>
</comment>
<comment type="subcellular location">
    <subcellularLocation>
        <location evidence="1">Cytoplasm</location>
    </subcellularLocation>
</comment>
<comment type="similarity">
    <text evidence="1">Belongs to the XseB family.</text>
</comment>